<reference key="1">
    <citation type="submission" date="2006-03" db="EMBL/GenBank/DDBJ databases">
        <title>Complete sequence of Shewanella denitrificans OS217.</title>
        <authorList>
            <consortium name="US DOE Joint Genome Institute"/>
            <person name="Copeland A."/>
            <person name="Lucas S."/>
            <person name="Lapidus A."/>
            <person name="Barry K."/>
            <person name="Detter J.C."/>
            <person name="Glavina del Rio T."/>
            <person name="Hammon N."/>
            <person name="Israni S."/>
            <person name="Dalin E."/>
            <person name="Tice H."/>
            <person name="Pitluck S."/>
            <person name="Brettin T."/>
            <person name="Bruce D."/>
            <person name="Han C."/>
            <person name="Tapia R."/>
            <person name="Gilna P."/>
            <person name="Kiss H."/>
            <person name="Schmutz J."/>
            <person name="Larimer F."/>
            <person name="Land M."/>
            <person name="Hauser L."/>
            <person name="Kyrpides N."/>
            <person name="Lykidis A."/>
            <person name="Richardson P."/>
        </authorList>
    </citation>
    <scope>NUCLEOTIDE SEQUENCE [LARGE SCALE GENOMIC DNA]</scope>
    <source>
        <strain>OS217 / ATCC BAA-1090 / DSM 15013</strain>
    </source>
</reference>
<accession>Q12NA7</accession>
<proteinExistence type="inferred from homology"/>
<sequence>MQHELMDNHDFLAFTLAHPHGIAQRFSFELGQHTQVEVWDTGVIAFLPKEKYTAQAPKQVILSCAVHGNETAPIEICNRLITELLTEKVQAKHRTLFLIGNPPAIHNQTRFIEENMNRLFSGAHSKGEGLTHAERIRAKALEDYVAEFYLGAPSNEQRIHYDLHTAIRPSKHEKFAIYPYRPGRAYSGEQIMFLAACGVDTILFHHEPTTTFSYYSSEQFNADAFTVELGKVMPFGQNDMSRFEQTQTMLTKLVSGEALGLSAFSAEKVNLYKVCRSINKRFEDFAFNFADQAENFSAFTKGEVLATEGGEQVLVEQPQEAIVFPNAKVPVGQRTVLCLVPAPNENIR</sequence>
<organism>
    <name type="scientific">Shewanella denitrificans (strain OS217 / ATCC BAA-1090 / DSM 15013)</name>
    <dbReference type="NCBI Taxonomy" id="318161"/>
    <lineage>
        <taxon>Bacteria</taxon>
        <taxon>Pseudomonadati</taxon>
        <taxon>Pseudomonadota</taxon>
        <taxon>Gammaproteobacteria</taxon>
        <taxon>Alteromonadales</taxon>
        <taxon>Shewanellaceae</taxon>
        <taxon>Shewanella</taxon>
    </lineage>
</organism>
<dbReference type="EC" id="3.5.1.96" evidence="1"/>
<dbReference type="EMBL" id="CP000302">
    <property type="protein sequence ID" value="ABE55069.1"/>
    <property type="molecule type" value="Genomic_DNA"/>
</dbReference>
<dbReference type="RefSeq" id="WP_011496226.1">
    <property type="nucleotide sequence ID" value="NC_007954.1"/>
</dbReference>
<dbReference type="SMR" id="Q12NA7"/>
<dbReference type="STRING" id="318161.Sden_1785"/>
<dbReference type="KEGG" id="sdn:Sden_1785"/>
<dbReference type="eggNOG" id="COG2988">
    <property type="taxonomic scope" value="Bacteria"/>
</dbReference>
<dbReference type="HOGENOM" id="CLU_071608_0_0_6"/>
<dbReference type="OrthoDB" id="5290473at2"/>
<dbReference type="UniPathway" id="UPA00185">
    <property type="reaction ID" value="UER00283"/>
</dbReference>
<dbReference type="Proteomes" id="UP000001982">
    <property type="component" value="Chromosome"/>
</dbReference>
<dbReference type="GO" id="GO:0016788">
    <property type="term" value="F:hydrolase activity, acting on ester bonds"/>
    <property type="evidence" value="ECO:0007669"/>
    <property type="project" value="UniProtKB-UniRule"/>
</dbReference>
<dbReference type="GO" id="GO:0009017">
    <property type="term" value="F:succinylglutamate desuccinylase activity"/>
    <property type="evidence" value="ECO:0007669"/>
    <property type="project" value="UniProtKB-EC"/>
</dbReference>
<dbReference type="GO" id="GO:0008270">
    <property type="term" value="F:zinc ion binding"/>
    <property type="evidence" value="ECO:0007669"/>
    <property type="project" value="UniProtKB-UniRule"/>
</dbReference>
<dbReference type="GO" id="GO:0019544">
    <property type="term" value="P:arginine catabolic process to glutamate"/>
    <property type="evidence" value="ECO:0007669"/>
    <property type="project" value="UniProtKB-UniRule"/>
</dbReference>
<dbReference type="GO" id="GO:0019545">
    <property type="term" value="P:arginine catabolic process to succinate"/>
    <property type="evidence" value="ECO:0007669"/>
    <property type="project" value="UniProtKB-UniRule"/>
</dbReference>
<dbReference type="CDD" id="cd03855">
    <property type="entry name" value="M14_ASTE"/>
    <property type="match status" value="1"/>
</dbReference>
<dbReference type="Gene3D" id="3.40.630.10">
    <property type="entry name" value="Zn peptidases"/>
    <property type="match status" value="1"/>
</dbReference>
<dbReference type="HAMAP" id="MF_00767">
    <property type="entry name" value="Arg_catab_AstE"/>
    <property type="match status" value="1"/>
</dbReference>
<dbReference type="InterPro" id="IPR050178">
    <property type="entry name" value="AspA/AstE_fam"/>
</dbReference>
<dbReference type="InterPro" id="IPR055438">
    <property type="entry name" value="AstE_AspA_cat"/>
</dbReference>
<dbReference type="InterPro" id="IPR007036">
    <property type="entry name" value="Aste_AspA_hybrid_dom"/>
</dbReference>
<dbReference type="InterPro" id="IPR016681">
    <property type="entry name" value="SuccinylGlu_desuccinylase"/>
</dbReference>
<dbReference type="NCBIfam" id="TIGR03242">
    <property type="entry name" value="arg_catab_astE"/>
    <property type="match status" value="1"/>
</dbReference>
<dbReference type="NCBIfam" id="NF003706">
    <property type="entry name" value="PRK05324.1"/>
    <property type="match status" value="1"/>
</dbReference>
<dbReference type="PANTHER" id="PTHR15162">
    <property type="entry name" value="ASPARTOACYLASE"/>
    <property type="match status" value="1"/>
</dbReference>
<dbReference type="PANTHER" id="PTHR15162:SF7">
    <property type="entry name" value="SUCCINYLGLUTAMATE DESUCCINYLASE"/>
    <property type="match status" value="1"/>
</dbReference>
<dbReference type="Pfam" id="PF24827">
    <property type="entry name" value="AstE_AspA_cat"/>
    <property type="match status" value="1"/>
</dbReference>
<dbReference type="Pfam" id="PF04952">
    <property type="entry name" value="AstE_AspA_hybrid"/>
    <property type="match status" value="1"/>
</dbReference>
<dbReference type="PIRSF" id="PIRSF017020">
    <property type="entry name" value="AstE"/>
    <property type="match status" value="1"/>
</dbReference>
<dbReference type="SUPFAM" id="SSF53187">
    <property type="entry name" value="Zn-dependent exopeptidases"/>
    <property type="match status" value="1"/>
</dbReference>
<gene>
    <name evidence="1" type="primary">astE</name>
    <name type="ordered locus">Sden_1785</name>
</gene>
<keyword id="KW-0056">Arginine metabolism</keyword>
<keyword id="KW-0378">Hydrolase</keyword>
<keyword id="KW-0479">Metal-binding</keyword>
<keyword id="KW-1185">Reference proteome</keyword>
<keyword id="KW-0862">Zinc</keyword>
<feature type="chain" id="PRO_0000262080" description="Succinylglutamate desuccinylase">
    <location>
        <begin position="1"/>
        <end position="348"/>
    </location>
</feature>
<feature type="active site" evidence="1">
    <location>
        <position position="228"/>
    </location>
</feature>
<feature type="binding site" evidence="1">
    <location>
        <position position="67"/>
    </location>
    <ligand>
        <name>Zn(2+)</name>
        <dbReference type="ChEBI" id="CHEBI:29105"/>
    </ligand>
</feature>
<feature type="binding site" evidence="1">
    <location>
        <position position="70"/>
    </location>
    <ligand>
        <name>Zn(2+)</name>
        <dbReference type="ChEBI" id="CHEBI:29105"/>
    </ligand>
</feature>
<feature type="binding site" evidence="1">
    <location>
        <position position="164"/>
    </location>
    <ligand>
        <name>Zn(2+)</name>
        <dbReference type="ChEBI" id="CHEBI:29105"/>
    </ligand>
</feature>
<name>ASTE_SHEDO</name>
<evidence type="ECO:0000255" key="1">
    <source>
        <dbReference type="HAMAP-Rule" id="MF_00767"/>
    </source>
</evidence>
<comment type="function">
    <text evidence="1">Transforms N(2)-succinylglutamate into succinate and glutamate.</text>
</comment>
<comment type="catalytic activity">
    <reaction evidence="1">
        <text>N-succinyl-L-glutamate + H2O = L-glutamate + succinate</text>
        <dbReference type="Rhea" id="RHEA:15169"/>
        <dbReference type="ChEBI" id="CHEBI:15377"/>
        <dbReference type="ChEBI" id="CHEBI:29985"/>
        <dbReference type="ChEBI" id="CHEBI:30031"/>
        <dbReference type="ChEBI" id="CHEBI:58763"/>
        <dbReference type="EC" id="3.5.1.96"/>
    </reaction>
</comment>
<comment type="cofactor">
    <cofactor evidence="1">
        <name>Zn(2+)</name>
        <dbReference type="ChEBI" id="CHEBI:29105"/>
    </cofactor>
    <text evidence="1">Binds 1 zinc ion per subunit.</text>
</comment>
<comment type="pathway">
    <text evidence="1">Amino-acid degradation; L-arginine degradation via AST pathway; L-glutamate and succinate from L-arginine: step 5/5.</text>
</comment>
<comment type="similarity">
    <text evidence="1">Belongs to the AspA/AstE family. Succinylglutamate desuccinylase subfamily.</text>
</comment>
<protein>
    <recommendedName>
        <fullName evidence="1">Succinylglutamate desuccinylase</fullName>
        <ecNumber evidence="1">3.5.1.96</ecNumber>
    </recommendedName>
</protein>